<proteinExistence type="inferred from homology"/>
<comment type="function">
    <text evidence="1">Responsible for the provision of inositol required for synthesis of phosphatidylinositol and polyphosphoinositides. Has broad substrate specificity and can use myo-inositol monophosphates, myo-inositol 1,3-diphosphate, myo-inositol 1,4-diphosphate, scyllo-inositol-phosphate, D-galactose 1-phosphate, glucose-1-phosphate, glucose-6-phosphate, fructose-1-phosphate, beta-glycerophosphate, and 2'-AMP as substrates.</text>
</comment>
<comment type="catalytic activity">
    <reaction evidence="1">
        <text>a myo-inositol phosphate + H2O = myo-inositol + phosphate</text>
        <dbReference type="Rhea" id="RHEA:24056"/>
        <dbReference type="ChEBI" id="CHEBI:15377"/>
        <dbReference type="ChEBI" id="CHEBI:17268"/>
        <dbReference type="ChEBI" id="CHEBI:43474"/>
        <dbReference type="ChEBI" id="CHEBI:84139"/>
        <dbReference type="EC" id="3.1.3.25"/>
    </reaction>
</comment>
<comment type="catalytic activity">
    <reaction evidence="1">
        <text>alpha-D-galactose 1-phosphate + H2O = D-galactose + phosphate</text>
        <dbReference type="Rhea" id="RHEA:29315"/>
        <dbReference type="ChEBI" id="CHEBI:4139"/>
        <dbReference type="ChEBI" id="CHEBI:15377"/>
        <dbReference type="ChEBI" id="CHEBI:43474"/>
        <dbReference type="ChEBI" id="CHEBI:58336"/>
        <dbReference type="EC" id="3.1.3.94"/>
    </reaction>
</comment>
<comment type="cofactor">
    <cofactor evidence="1">
        <name>Mg(2+)</name>
        <dbReference type="ChEBI" id="CHEBI:18420"/>
    </cofactor>
</comment>
<comment type="activity regulation">
    <text evidence="1">Inhibited by Li(+), Ca(2+) and Mn(2+), but also by Mg(2+) at concentrations above 3 mM.</text>
</comment>
<comment type="pathway">
    <text>Polyol metabolism; myo-inositol biosynthesis; myo-inositol from D-glucose 6-phosphate: step 2/2.</text>
</comment>
<comment type="subcellular location">
    <subcellularLocation>
        <location evidence="1">Cytoplasm</location>
    </subcellularLocation>
</comment>
<comment type="similarity">
    <text evidence="2">Belongs to the inositol monophosphatase superfamily.</text>
</comment>
<gene>
    <name type="primary">impa1</name>
    <name type="ORF">DDB_G0281239</name>
</gene>
<name>IMPA1_DICDI</name>
<accession>Q54U72</accession>
<feature type="chain" id="PRO_0000328360" description="Inositol monophosphatase">
    <location>
        <begin position="1"/>
        <end position="272"/>
    </location>
</feature>
<feature type="binding site" evidence="1">
    <location>
        <position position="71"/>
    </location>
    <ligand>
        <name>Mg(2+)</name>
        <dbReference type="ChEBI" id="CHEBI:18420"/>
        <label>1</label>
        <note>catalytic</note>
    </ligand>
</feature>
<feature type="binding site" evidence="1">
    <location>
        <position position="71"/>
    </location>
    <ligand>
        <name>substrate</name>
    </ligand>
</feature>
<feature type="binding site" evidence="1">
    <location>
        <position position="90"/>
    </location>
    <ligand>
        <name>Mg(2+)</name>
        <dbReference type="ChEBI" id="CHEBI:18420"/>
        <label>1</label>
        <note>catalytic</note>
    </ligand>
</feature>
<feature type="binding site" evidence="1">
    <location>
        <position position="90"/>
    </location>
    <ligand>
        <name>Mg(2+)</name>
        <dbReference type="ChEBI" id="CHEBI:18420"/>
        <label>2</label>
    </ligand>
</feature>
<feature type="binding site" evidence="1">
    <location>
        <begin position="92"/>
        <end position="95"/>
    </location>
    <ligand>
        <name>substrate</name>
    </ligand>
</feature>
<feature type="binding site" evidence="1">
    <location>
        <position position="92"/>
    </location>
    <ligand>
        <name>Mg(2+)</name>
        <dbReference type="ChEBI" id="CHEBI:18420"/>
        <label>1</label>
        <note>catalytic</note>
    </ligand>
</feature>
<feature type="binding site" evidence="1">
    <location>
        <position position="93"/>
    </location>
    <ligand>
        <name>Mg(2+)</name>
        <dbReference type="ChEBI" id="CHEBI:18420"/>
        <label>2</label>
    </ligand>
</feature>
<feature type="binding site" evidence="1">
    <location>
        <begin position="194"/>
        <end position="196"/>
    </location>
    <ligand>
        <name>substrate</name>
    </ligand>
</feature>
<feature type="binding site" evidence="1">
    <location>
        <position position="213"/>
    </location>
    <ligand>
        <name>substrate</name>
    </ligand>
</feature>
<feature type="binding site" evidence="1">
    <location>
        <position position="220"/>
    </location>
    <ligand>
        <name>Mg(2+)</name>
        <dbReference type="ChEBI" id="CHEBI:18420"/>
        <label>2</label>
    </ligand>
</feature>
<feature type="binding site" evidence="1">
    <location>
        <position position="220"/>
    </location>
    <ligand>
        <name>substrate</name>
    </ligand>
</feature>
<keyword id="KW-0963">Cytoplasm</keyword>
<keyword id="KW-0378">Hydrolase</keyword>
<keyword id="KW-0452">Lithium</keyword>
<keyword id="KW-0460">Magnesium</keyword>
<keyword id="KW-0479">Metal-binding</keyword>
<keyword id="KW-1185">Reference proteome</keyword>
<dbReference type="EC" id="3.1.3.25" evidence="1"/>
<dbReference type="EC" id="3.1.3.94" evidence="1"/>
<dbReference type="EMBL" id="AAFI02000040">
    <property type="protein sequence ID" value="EAL66916.1"/>
    <property type="molecule type" value="Genomic_DNA"/>
</dbReference>
<dbReference type="RefSeq" id="XP_640904.1">
    <property type="nucleotide sequence ID" value="XM_635812.1"/>
</dbReference>
<dbReference type="SMR" id="Q54U72"/>
<dbReference type="FunCoup" id="Q54U72">
    <property type="interactions" value="168"/>
</dbReference>
<dbReference type="STRING" id="44689.Q54U72"/>
<dbReference type="PaxDb" id="44689-DDB0235253"/>
<dbReference type="EnsemblProtists" id="EAL66916">
    <property type="protein sequence ID" value="EAL66916"/>
    <property type="gene ID" value="DDB_G0281239"/>
</dbReference>
<dbReference type="GeneID" id="8622963"/>
<dbReference type="KEGG" id="ddi:DDB_G0281239"/>
<dbReference type="dictyBase" id="DDB_G0281239">
    <property type="gene designation" value="impa1"/>
</dbReference>
<dbReference type="VEuPathDB" id="AmoebaDB:DDB_G0281239"/>
<dbReference type="eggNOG" id="KOG2951">
    <property type="taxonomic scope" value="Eukaryota"/>
</dbReference>
<dbReference type="HOGENOM" id="CLU_044118_1_0_1"/>
<dbReference type="InParanoid" id="Q54U72"/>
<dbReference type="OMA" id="ERGLHPW"/>
<dbReference type="PhylomeDB" id="Q54U72"/>
<dbReference type="Reactome" id="R-DDI-1855183">
    <property type="pathway name" value="Synthesis of IP2, IP, and Ins in the cytosol"/>
</dbReference>
<dbReference type="UniPathway" id="UPA00823">
    <property type="reaction ID" value="UER00788"/>
</dbReference>
<dbReference type="PRO" id="PR:Q54U72"/>
<dbReference type="Proteomes" id="UP000002195">
    <property type="component" value="Chromosome 3"/>
</dbReference>
<dbReference type="GO" id="GO:0005737">
    <property type="term" value="C:cytoplasm"/>
    <property type="evidence" value="ECO:0007669"/>
    <property type="project" value="UniProtKB-SubCell"/>
</dbReference>
<dbReference type="GO" id="GO:0008934">
    <property type="term" value="F:inositol monophosphate 1-phosphatase activity"/>
    <property type="evidence" value="ECO:0000318"/>
    <property type="project" value="GO_Central"/>
</dbReference>
<dbReference type="GO" id="GO:0052834">
    <property type="term" value="F:inositol monophosphate phosphatase activity"/>
    <property type="evidence" value="ECO:0000250"/>
    <property type="project" value="UniProtKB"/>
</dbReference>
<dbReference type="GO" id="GO:0031403">
    <property type="term" value="F:lithium ion binding"/>
    <property type="evidence" value="ECO:0000250"/>
    <property type="project" value="UniProtKB"/>
</dbReference>
<dbReference type="GO" id="GO:0000287">
    <property type="term" value="F:magnesium ion binding"/>
    <property type="evidence" value="ECO:0000250"/>
    <property type="project" value="UniProtKB"/>
</dbReference>
<dbReference type="GO" id="GO:0030145">
    <property type="term" value="F:manganese ion binding"/>
    <property type="evidence" value="ECO:0000250"/>
    <property type="project" value="UniProtKB"/>
</dbReference>
<dbReference type="GO" id="GO:0006021">
    <property type="term" value="P:inositol biosynthetic process"/>
    <property type="evidence" value="ECO:0007669"/>
    <property type="project" value="UniProtKB-UniPathway"/>
</dbReference>
<dbReference type="GO" id="GO:0006020">
    <property type="term" value="P:inositol metabolic process"/>
    <property type="evidence" value="ECO:0000318"/>
    <property type="project" value="GO_Central"/>
</dbReference>
<dbReference type="GO" id="GO:0006661">
    <property type="term" value="P:phosphatidylinositol biosynthetic process"/>
    <property type="evidence" value="ECO:0000315"/>
    <property type="project" value="dictyBase"/>
</dbReference>
<dbReference type="GO" id="GO:0046854">
    <property type="term" value="P:phosphatidylinositol phosphate biosynthetic process"/>
    <property type="evidence" value="ECO:0007669"/>
    <property type="project" value="InterPro"/>
</dbReference>
<dbReference type="GO" id="GO:0010226">
    <property type="term" value="P:response to lithium ion"/>
    <property type="evidence" value="ECO:0000315"/>
    <property type="project" value="dictyBase"/>
</dbReference>
<dbReference type="GO" id="GO:0007165">
    <property type="term" value="P:signal transduction"/>
    <property type="evidence" value="ECO:0000318"/>
    <property type="project" value="GO_Central"/>
</dbReference>
<dbReference type="CDD" id="cd01639">
    <property type="entry name" value="IMPase"/>
    <property type="match status" value="1"/>
</dbReference>
<dbReference type="FunFam" id="3.30.540.10:FF:000013">
    <property type="entry name" value="Inositol-1-monophosphatase"/>
    <property type="match status" value="1"/>
</dbReference>
<dbReference type="FunFam" id="3.40.190.80:FF:000002">
    <property type="entry name" value="Inositol-1-monophosphatase"/>
    <property type="match status" value="1"/>
</dbReference>
<dbReference type="Gene3D" id="3.40.190.80">
    <property type="match status" value="1"/>
</dbReference>
<dbReference type="Gene3D" id="3.30.540.10">
    <property type="entry name" value="Fructose-1,6-Bisphosphatase, subunit A, domain 1"/>
    <property type="match status" value="1"/>
</dbReference>
<dbReference type="InterPro" id="IPR033942">
    <property type="entry name" value="IMPase"/>
</dbReference>
<dbReference type="InterPro" id="IPR020583">
    <property type="entry name" value="Inositol_monoP_metal-BS"/>
</dbReference>
<dbReference type="InterPro" id="IPR000760">
    <property type="entry name" value="Inositol_monophosphatase-like"/>
</dbReference>
<dbReference type="InterPro" id="IPR020550">
    <property type="entry name" value="Inositol_monophosphatase_CS"/>
</dbReference>
<dbReference type="PANTHER" id="PTHR20854">
    <property type="entry name" value="INOSITOL MONOPHOSPHATASE"/>
    <property type="match status" value="1"/>
</dbReference>
<dbReference type="PANTHER" id="PTHR20854:SF4">
    <property type="entry name" value="INOSITOL-1-MONOPHOSPHATASE-RELATED"/>
    <property type="match status" value="1"/>
</dbReference>
<dbReference type="Pfam" id="PF00459">
    <property type="entry name" value="Inositol_P"/>
    <property type="match status" value="1"/>
</dbReference>
<dbReference type="PRINTS" id="PR00377">
    <property type="entry name" value="IMPHPHTASES"/>
</dbReference>
<dbReference type="SUPFAM" id="SSF56655">
    <property type="entry name" value="Carbohydrate phosphatase"/>
    <property type="match status" value="1"/>
</dbReference>
<dbReference type="PROSITE" id="PS00629">
    <property type="entry name" value="IMP_1"/>
    <property type="match status" value="1"/>
</dbReference>
<dbReference type="PROSITE" id="PS00630">
    <property type="entry name" value="IMP_2"/>
    <property type="match status" value="1"/>
</dbReference>
<protein>
    <recommendedName>
        <fullName>Inositol monophosphatase</fullName>
        <shortName>IMP</shortName>
        <shortName>IMPase</shortName>
        <ecNumber evidence="1">3.1.3.25</ecNumber>
    </recommendedName>
    <alternativeName>
        <fullName evidence="1">D-galactose 1-phosphate phosphatase</fullName>
        <ecNumber evidence="1">3.1.3.94</ecNumber>
    </alternativeName>
    <alternativeName>
        <fullName>Inositol-1(or 4)-monophosphatase</fullName>
    </alternativeName>
</protein>
<evidence type="ECO:0000250" key="1">
    <source>
        <dbReference type="UniProtKB" id="P29218"/>
    </source>
</evidence>
<evidence type="ECO:0000305" key="2"/>
<organism>
    <name type="scientific">Dictyostelium discoideum</name>
    <name type="common">Social amoeba</name>
    <dbReference type="NCBI Taxonomy" id="44689"/>
    <lineage>
        <taxon>Eukaryota</taxon>
        <taxon>Amoebozoa</taxon>
        <taxon>Evosea</taxon>
        <taxon>Eumycetozoa</taxon>
        <taxon>Dictyostelia</taxon>
        <taxon>Dictyosteliales</taxon>
        <taxon>Dictyosteliaceae</taxon>
        <taxon>Dictyostelium</taxon>
    </lineage>
</organism>
<sequence>MENITLDQYLQSAVDVVKEIGPMILKNYNSRSKQIEYKGAIDLVTDTDKAVEEHIIKTLTTKYPHTKILGEESTKDGIYNWGNEPTWVIDPIDGTTNFVHRFPLFCVSIALSINKEIVVACLYAPVLDELFTATKGGGAFLNGESISVSSVEHLSQSIISTNVGYDRSDKGIEFMLTNFKNILKDNVQALRFSGTAAWEMASVSCGRVDSFYEWGIHPWDIAAASLLITEAGGVVVDPSGGKCDMESRKVLCGNPNIVNKLSKLLIEKPTSN</sequence>
<reference key="1">
    <citation type="journal article" date="2005" name="Nature">
        <title>The genome of the social amoeba Dictyostelium discoideum.</title>
        <authorList>
            <person name="Eichinger L."/>
            <person name="Pachebat J.A."/>
            <person name="Gloeckner G."/>
            <person name="Rajandream M.A."/>
            <person name="Sucgang R."/>
            <person name="Berriman M."/>
            <person name="Song J."/>
            <person name="Olsen R."/>
            <person name="Szafranski K."/>
            <person name="Xu Q."/>
            <person name="Tunggal B."/>
            <person name="Kummerfeld S."/>
            <person name="Madera M."/>
            <person name="Konfortov B.A."/>
            <person name="Rivero F."/>
            <person name="Bankier A.T."/>
            <person name="Lehmann R."/>
            <person name="Hamlin N."/>
            <person name="Davies R."/>
            <person name="Gaudet P."/>
            <person name="Fey P."/>
            <person name="Pilcher K."/>
            <person name="Chen G."/>
            <person name="Saunders D."/>
            <person name="Sodergren E.J."/>
            <person name="Davis P."/>
            <person name="Kerhornou A."/>
            <person name="Nie X."/>
            <person name="Hall N."/>
            <person name="Anjard C."/>
            <person name="Hemphill L."/>
            <person name="Bason N."/>
            <person name="Farbrother P."/>
            <person name="Desany B."/>
            <person name="Just E."/>
            <person name="Morio T."/>
            <person name="Rost R."/>
            <person name="Churcher C.M."/>
            <person name="Cooper J."/>
            <person name="Haydock S."/>
            <person name="van Driessche N."/>
            <person name="Cronin A."/>
            <person name="Goodhead I."/>
            <person name="Muzny D.M."/>
            <person name="Mourier T."/>
            <person name="Pain A."/>
            <person name="Lu M."/>
            <person name="Harper D."/>
            <person name="Lindsay R."/>
            <person name="Hauser H."/>
            <person name="James K.D."/>
            <person name="Quiles M."/>
            <person name="Madan Babu M."/>
            <person name="Saito T."/>
            <person name="Buchrieser C."/>
            <person name="Wardroper A."/>
            <person name="Felder M."/>
            <person name="Thangavelu M."/>
            <person name="Johnson D."/>
            <person name="Knights A."/>
            <person name="Loulseged H."/>
            <person name="Mungall K.L."/>
            <person name="Oliver K."/>
            <person name="Price C."/>
            <person name="Quail M.A."/>
            <person name="Urushihara H."/>
            <person name="Hernandez J."/>
            <person name="Rabbinowitsch E."/>
            <person name="Steffen D."/>
            <person name="Sanders M."/>
            <person name="Ma J."/>
            <person name="Kohara Y."/>
            <person name="Sharp S."/>
            <person name="Simmonds M.N."/>
            <person name="Spiegler S."/>
            <person name="Tivey A."/>
            <person name="Sugano S."/>
            <person name="White B."/>
            <person name="Walker D."/>
            <person name="Woodward J.R."/>
            <person name="Winckler T."/>
            <person name="Tanaka Y."/>
            <person name="Shaulsky G."/>
            <person name="Schleicher M."/>
            <person name="Weinstock G.M."/>
            <person name="Rosenthal A."/>
            <person name="Cox E.C."/>
            <person name="Chisholm R.L."/>
            <person name="Gibbs R.A."/>
            <person name="Loomis W.F."/>
            <person name="Platzer M."/>
            <person name="Kay R.R."/>
            <person name="Williams J.G."/>
            <person name="Dear P.H."/>
            <person name="Noegel A.A."/>
            <person name="Barrell B.G."/>
            <person name="Kuspa A."/>
        </authorList>
    </citation>
    <scope>NUCLEOTIDE SEQUENCE [LARGE SCALE GENOMIC DNA]</scope>
    <source>
        <strain>AX4</strain>
    </source>
</reference>